<gene>
    <name evidence="1" type="primary">secY</name>
    <name type="ordered locus">syc1883_d</name>
</gene>
<name>SECY_SYNP6</name>
<sequence length="439" mass="47151">MVVSRGKTPNAQETFLQMAQASGLRGRILITVGLLILCRLGIFIPVPGIDRVAFSNDLQGNANLGGVIGFLDIFSGGGLSALGVFALGILPYINASIILQLLTAAVPALEDLQKNEGEAGRRKIAQLTRYVSLGWALLQSIVIAVWVTRYAVTPGPLFTIQTALALVAGSMFVMWISELITERGIGNGASLLIFLNIVATLPRSLQQTLELAQSGDRSTVGGIVILLIVFLATIVGIVFVQEGTRRIPVVSARRQVGNRVYSERSSYLPLRLNQGGVMPIIFASAILVLPFSLANFTSNEVVLRIANYLSPNGPTPWIYALFYLVLIVAFSYFYSSLILNPVDLAQNLKKMGSSIPGVRPGRATSQYVQGVLNRLTILGAVFLGLVAIIPTAVEGATRIRTFQGFGATSLLILVGVAIDTAKQVQTYVISQRYEGMVKD</sequence>
<reference key="1">
    <citation type="journal article" date="1997" name="Gene">
        <title>Organization of a large gene cluster encoding ribosomal proteins in the cyanobacterium Synechococcus sp. strain PCC 6301: comparison of gene clusters among cyanobacteria, eubacteria and chloroplast genomes.</title>
        <authorList>
            <person name="Sugita M."/>
            <person name="Sugishita H."/>
            <person name="Fujishiro T."/>
            <person name="Tsuboi M."/>
            <person name="Sugita C."/>
            <person name="Endo T."/>
            <person name="Sugiura M."/>
        </authorList>
    </citation>
    <scope>NUCLEOTIDE SEQUENCE [GENOMIC DNA]</scope>
</reference>
<reference key="2">
    <citation type="journal article" date="2007" name="Photosyn. Res.">
        <title>Complete nucleotide sequence of the freshwater unicellular cyanobacterium Synechococcus elongatus PCC 6301 chromosome: gene content and organization.</title>
        <authorList>
            <person name="Sugita C."/>
            <person name="Ogata K."/>
            <person name="Shikata M."/>
            <person name="Jikuya H."/>
            <person name="Takano J."/>
            <person name="Furumichi M."/>
            <person name="Kanehisa M."/>
            <person name="Omata T."/>
            <person name="Sugiura M."/>
            <person name="Sugita M."/>
        </authorList>
    </citation>
    <scope>NUCLEOTIDE SEQUENCE [LARGE SCALE GENOMIC DNA]</scope>
    <source>
        <strain>ATCC 27144 / PCC 6301 / SAUG 1402/1</strain>
    </source>
</reference>
<organism>
    <name type="scientific">Synechococcus sp. (strain ATCC 27144 / PCC 6301 / SAUG 1402/1)</name>
    <name type="common">Anacystis nidulans</name>
    <dbReference type="NCBI Taxonomy" id="269084"/>
    <lineage>
        <taxon>Bacteria</taxon>
        <taxon>Bacillati</taxon>
        <taxon>Cyanobacteriota</taxon>
        <taxon>Cyanophyceae</taxon>
        <taxon>Synechococcales</taxon>
        <taxon>Synechococcaceae</taxon>
        <taxon>Synechococcus</taxon>
    </lineage>
</organism>
<dbReference type="EMBL" id="AB000111">
    <property type="protein sequence ID" value="BAA22467.1"/>
    <property type="molecule type" value="Genomic_DNA"/>
</dbReference>
<dbReference type="EMBL" id="AP008231">
    <property type="protein sequence ID" value="BAD80073.1"/>
    <property type="molecule type" value="Genomic_DNA"/>
</dbReference>
<dbReference type="RefSeq" id="WP_011244193.1">
    <property type="nucleotide sequence ID" value="NZ_CP085785.1"/>
</dbReference>
<dbReference type="SMR" id="P0A4H1"/>
<dbReference type="TCDB" id="3.A.5.4.1">
    <property type="family name" value="the general secretory pathway (sec) family"/>
</dbReference>
<dbReference type="GeneID" id="72431097"/>
<dbReference type="KEGG" id="syc:syc1883_d"/>
<dbReference type="eggNOG" id="COG0201">
    <property type="taxonomic scope" value="Bacteria"/>
</dbReference>
<dbReference type="Proteomes" id="UP000001175">
    <property type="component" value="Chromosome"/>
</dbReference>
<dbReference type="GO" id="GO:0031676">
    <property type="term" value="C:plasma membrane-derived thylakoid membrane"/>
    <property type="evidence" value="ECO:0007669"/>
    <property type="project" value="UniProtKB-SubCell"/>
</dbReference>
<dbReference type="GO" id="GO:0065002">
    <property type="term" value="P:intracellular protein transmembrane transport"/>
    <property type="evidence" value="ECO:0007669"/>
    <property type="project" value="UniProtKB-UniRule"/>
</dbReference>
<dbReference type="GO" id="GO:0006605">
    <property type="term" value="P:protein targeting"/>
    <property type="evidence" value="ECO:0007669"/>
    <property type="project" value="UniProtKB-UniRule"/>
</dbReference>
<dbReference type="GO" id="GO:0043952">
    <property type="term" value="P:protein transport by the Sec complex"/>
    <property type="evidence" value="ECO:0007669"/>
    <property type="project" value="UniProtKB-UniRule"/>
</dbReference>
<dbReference type="FunFam" id="1.10.3370.10:FF:000001">
    <property type="entry name" value="Preprotein translocase subunit SecY"/>
    <property type="match status" value="1"/>
</dbReference>
<dbReference type="Gene3D" id="1.10.3370.10">
    <property type="entry name" value="SecY subunit domain"/>
    <property type="match status" value="1"/>
</dbReference>
<dbReference type="HAMAP" id="MF_01465">
    <property type="entry name" value="SecY"/>
    <property type="match status" value="1"/>
</dbReference>
<dbReference type="InterPro" id="IPR026593">
    <property type="entry name" value="SecY"/>
</dbReference>
<dbReference type="InterPro" id="IPR002208">
    <property type="entry name" value="SecY/SEC61-alpha"/>
</dbReference>
<dbReference type="InterPro" id="IPR030659">
    <property type="entry name" value="SecY_CS"/>
</dbReference>
<dbReference type="InterPro" id="IPR023201">
    <property type="entry name" value="SecY_dom_sf"/>
</dbReference>
<dbReference type="NCBIfam" id="TIGR00967">
    <property type="entry name" value="3a0501s007"/>
    <property type="match status" value="1"/>
</dbReference>
<dbReference type="PANTHER" id="PTHR10906">
    <property type="entry name" value="SECY/SEC61-ALPHA FAMILY MEMBER"/>
    <property type="match status" value="1"/>
</dbReference>
<dbReference type="Pfam" id="PF00344">
    <property type="entry name" value="SecY"/>
    <property type="match status" value="1"/>
</dbReference>
<dbReference type="PIRSF" id="PIRSF004557">
    <property type="entry name" value="SecY"/>
    <property type="match status" value="1"/>
</dbReference>
<dbReference type="PRINTS" id="PR00303">
    <property type="entry name" value="SECYTRNLCASE"/>
</dbReference>
<dbReference type="SUPFAM" id="SSF103491">
    <property type="entry name" value="Preprotein translocase SecY subunit"/>
    <property type="match status" value="1"/>
</dbReference>
<dbReference type="PROSITE" id="PS00755">
    <property type="entry name" value="SECY_1"/>
    <property type="match status" value="1"/>
</dbReference>
<dbReference type="PROSITE" id="PS00756">
    <property type="entry name" value="SECY_2"/>
    <property type="match status" value="1"/>
</dbReference>
<protein>
    <recommendedName>
        <fullName evidence="1">Protein translocase subunit SecY</fullName>
    </recommendedName>
</protein>
<proteinExistence type="inferred from homology"/>
<comment type="function">
    <text evidence="1">The central subunit of the protein translocation channel SecYEG. Consists of two halves formed by TMs 1-5 and 6-10. These two domains form a lateral gate at the front which open onto the bilayer between TMs 2 and 7, and are clamped together by SecE at the back. The channel is closed by both a pore ring composed of hydrophobic SecY resides and a short helix (helix 2A) on the extracellular side of the membrane which forms a plug. The plug probably moves laterally to allow the channel to open. The ring and the pore may move independently.</text>
</comment>
<comment type="subunit">
    <text evidence="1">Component of the Sec protein translocase complex. Heterotrimer consisting of SecY, SecE and SecG subunits. The heterotrimers can form oligomers, although 1 heterotrimer is thought to be able to translocate proteins. Interacts with the ribosome. Interacts with SecDF, and other proteins may be involved. Interacts with SecA.</text>
</comment>
<comment type="subcellular location">
    <subcellularLocation>
        <location evidence="1">Cell inner membrane</location>
        <topology evidence="1">Multi-pass membrane protein</topology>
    </subcellularLocation>
    <subcellularLocation>
        <location evidence="1">Cellular thylakoid membrane</location>
        <topology evidence="1">Multi-pass membrane protein</topology>
    </subcellularLocation>
</comment>
<comment type="similarity">
    <text evidence="1">Belongs to the SecY/SEC61-alpha family.</text>
</comment>
<accession>P0A4H1</accession>
<accession>P31159</accession>
<feature type="chain" id="PRO_0000131755" description="Protein translocase subunit SecY">
    <location>
        <begin position="1"/>
        <end position="439"/>
    </location>
</feature>
<feature type="transmembrane region" description="Helical" evidence="1">
    <location>
        <begin position="28"/>
        <end position="48"/>
    </location>
</feature>
<feature type="transmembrane region" description="Helical" evidence="1">
    <location>
        <begin position="73"/>
        <end position="93"/>
    </location>
</feature>
<feature type="transmembrane region" description="Helical" evidence="1">
    <location>
        <begin position="127"/>
        <end position="147"/>
    </location>
</feature>
<feature type="transmembrane region" description="Helical" evidence="1">
    <location>
        <begin position="156"/>
        <end position="176"/>
    </location>
</feature>
<feature type="transmembrane region" description="Helical" evidence="1">
    <location>
        <begin position="179"/>
        <end position="199"/>
    </location>
</feature>
<feature type="transmembrane region" description="Helical" evidence="1">
    <location>
        <begin position="220"/>
        <end position="240"/>
    </location>
</feature>
<feature type="transmembrane region" description="Helical" evidence="1">
    <location>
        <begin position="276"/>
        <end position="296"/>
    </location>
</feature>
<feature type="transmembrane region" description="Helical" evidence="1">
    <location>
        <begin position="318"/>
        <end position="338"/>
    </location>
</feature>
<feature type="transmembrane region" description="Helical" evidence="1">
    <location>
        <begin position="375"/>
        <end position="395"/>
    </location>
</feature>
<feature type="transmembrane region" description="Helical" evidence="1">
    <location>
        <begin position="401"/>
        <end position="421"/>
    </location>
</feature>
<evidence type="ECO:0000255" key="1">
    <source>
        <dbReference type="HAMAP-Rule" id="MF_01465"/>
    </source>
</evidence>
<keyword id="KW-0997">Cell inner membrane</keyword>
<keyword id="KW-1003">Cell membrane</keyword>
<keyword id="KW-0472">Membrane</keyword>
<keyword id="KW-0653">Protein transport</keyword>
<keyword id="KW-0793">Thylakoid</keyword>
<keyword id="KW-0811">Translocation</keyword>
<keyword id="KW-0812">Transmembrane</keyword>
<keyword id="KW-1133">Transmembrane helix</keyword>
<keyword id="KW-0813">Transport</keyword>